<reference key="1">
    <citation type="journal article" date="1999" name="Virology">
        <title>Isolation and characterization of APSE-1, a bacteriophage infecting the secondary endosymbiont of acyrthosiphon pisum.</title>
        <authorList>
            <person name="van der Wilk F."/>
            <person name="Dullemans A.M."/>
            <person name="Verbeek M."/>
            <person name="van den Heuvel J.F.J.M."/>
        </authorList>
    </citation>
    <scope>NUCLEOTIDE SEQUENCE [LARGE SCALE GENOMIC DNA]</scope>
</reference>
<gene>
    <name type="primary">49</name>
</gene>
<protein>
    <recommendedName>
        <fullName>Putative protein p49</fullName>
    </recommendedName>
</protein>
<sequence>MKLDNPHRYIGETIVLTNPSNNSQYLLNLEQQGYADEETKTLINMIRLLVEENKYLRKENNLLAKSHRGVGGLCRTQTRKRRAKSPLLYR</sequence>
<name>VP49_BPAPS</name>
<keyword id="KW-1185">Reference proteome</keyword>
<dbReference type="EMBL" id="AF157835">
    <property type="protein sequence ID" value="AAF03992.1"/>
    <property type="molecule type" value="Genomic_DNA"/>
</dbReference>
<dbReference type="RefSeq" id="NP_051010.1">
    <property type="nucleotide sequence ID" value="NC_000935.1"/>
</dbReference>
<dbReference type="SMR" id="Q9T1P9"/>
<dbReference type="KEGG" id="vg:1262343"/>
<dbReference type="Proteomes" id="UP000000853">
    <property type="component" value="Genome"/>
</dbReference>
<feature type="chain" id="PRO_0000077873" description="Putative protein p49">
    <location>
        <begin position="1"/>
        <end position="90"/>
    </location>
</feature>
<organismHost>
    <name type="scientific">Escherichia coli</name>
    <dbReference type="NCBI Taxonomy" id="562"/>
</organismHost>
<proteinExistence type="predicted"/>
<accession>Q9T1P9</accession>
<organism>
    <name type="scientific">Acyrthosiphon pisum secondary endosymbiont phage 1</name>
    <name type="common">Bacteriophage APSE-1</name>
    <dbReference type="NCBI Taxonomy" id="2682836"/>
    <lineage>
        <taxon>Viruses</taxon>
        <taxon>Duplodnaviria</taxon>
        <taxon>Heunggongvirae</taxon>
        <taxon>Uroviricota</taxon>
        <taxon>Caudoviricetes</taxon>
        <taxon>Sendosyvirus</taxon>
        <taxon>Sendosyvirus APSE1</taxon>
    </lineage>
</organism>